<dbReference type="EMBL" id="AK083942">
    <property type="protein sequence ID" value="BAC39076.1"/>
    <property type="molecule type" value="mRNA"/>
</dbReference>
<dbReference type="EMBL" id="BC066792">
    <property type="protein sequence ID" value="AAH66792.1"/>
    <property type="molecule type" value="mRNA"/>
</dbReference>
<dbReference type="CCDS" id="CCDS30145.1"/>
<dbReference type="RefSeq" id="NP_766367.1">
    <property type="nucleotide sequence ID" value="NM_172779.5"/>
</dbReference>
<dbReference type="RefSeq" id="XP_036017811.1">
    <property type="nucleotide sequence ID" value="XM_036161918.1"/>
</dbReference>
<dbReference type="SMR" id="Q8BND4"/>
<dbReference type="BioGRID" id="231796">
    <property type="interactions" value="1"/>
</dbReference>
<dbReference type="FunCoup" id="Q8BND4">
    <property type="interactions" value="1385"/>
</dbReference>
<dbReference type="STRING" id="10090.ENSMUSP00000035379"/>
<dbReference type="iPTMnet" id="Q8BND4"/>
<dbReference type="PhosphoSitePlus" id="Q8BND4"/>
<dbReference type="jPOST" id="Q8BND4"/>
<dbReference type="PaxDb" id="10090-ENSMUSP00000035379"/>
<dbReference type="PeptideAtlas" id="Q8BND4"/>
<dbReference type="ProteomicsDB" id="269070"/>
<dbReference type="Antibodypedia" id="538">
    <property type="antibodies" value="38 antibodies from 15 providers"/>
</dbReference>
<dbReference type="DNASU" id="236790"/>
<dbReference type="Ensembl" id="ENSMUST00000039374.9">
    <property type="protein sequence ID" value="ENSMUSP00000035379.3"/>
    <property type="gene ID" value="ENSMUSG00000035967.16"/>
</dbReference>
<dbReference type="Ensembl" id="ENSMUST00000132428.8">
    <property type="protein sequence ID" value="ENSMUSP00000138630.2"/>
    <property type="gene ID" value="ENSMUSG00000035967.16"/>
</dbReference>
<dbReference type="Ensembl" id="ENSMUST00000186445.7">
    <property type="protein sequence ID" value="ENSMUSP00000139507.2"/>
    <property type="gene ID" value="ENSMUSG00000035967.16"/>
</dbReference>
<dbReference type="GeneID" id="236790"/>
<dbReference type="KEGG" id="mmu:236790"/>
<dbReference type="UCSC" id="uc009tgg.2">
    <property type="organism name" value="mouse"/>
</dbReference>
<dbReference type="AGR" id="MGI:2442593"/>
<dbReference type="CTD" id="203522"/>
<dbReference type="MGI" id="MGI:2442593">
    <property type="gene designation" value="Ints6l"/>
</dbReference>
<dbReference type="VEuPathDB" id="HostDB:ENSMUSG00000035967"/>
<dbReference type="eggNOG" id="KOG3768">
    <property type="taxonomic scope" value="Eukaryota"/>
</dbReference>
<dbReference type="GeneTree" id="ENSGT00390000016655"/>
<dbReference type="HOGENOM" id="CLU_006789_0_0_1"/>
<dbReference type="InParanoid" id="Q8BND4"/>
<dbReference type="OMA" id="AFWPDST"/>
<dbReference type="PhylomeDB" id="Q8BND4"/>
<dbReference type="TreeFam" id="TF323386"/>
<dbReference type="BioGRID-ORCS" id="236790">
    <property type="hits" value="1 hit in 79 CRISPR screens"/>
</dbReference>
<dbReference type="ChiTaRS" id="Ints6l">
    <property type="organism name" value="mouse"/>
</dbReference>
<dbReference type="PRO" id="PR:Q8BND4"/>
<dbReference type="Proteomes" id="UP000000589">
    <property type="component" value="Chromosome X"/>
</dbReference>
<dbReference type="RNAct" id="Q8BND4">
    <property type="molecule type" value="protein"/>
</dbReference>
<dbReference type="Bgee" id="ENSMUSG00000035967">
    <property type="expression patterns" value="Expressed in granulocyte and 244 other cell types or tissues"/>
</dbReference>
<dbReference type="ExpressionAtlas" id="Q8BND4">
    <property type="expression patterns" value="baseline and differential"/>
</dbReference>
<dbReference type="CDD" id="cd00198">
    <property type="entry name" value="vWFA"/>
    <property type="match status" value="1"/>
</dbReference>
<dbReference type="FunFam" id="3.40.50.410:FF:000010">
    <property type="entry name" value="Integrator complex subunit 6 like"/>
    <property type="match status" value="1"/>
</dbReference>
<dbReference type="Gene3D" id="3.40.50.410">
    <property type="entry name" value="von Willebrand factor, type A domain"/>
    <property type="match status" value="1"/>
</dbReference>
<dbReference type="InterPro" id="IPR029307">
    <property type="entry name" value="INT_SG_DDX_CT_C"/>
</dbReference>
<dbReference type="InterPro" id="IPR051113">
    <property type="entry name" value="Integrator_subunit6"/>
</dbReference>
<dbReference type="InterPro" id="IPR002035">
    <property type="entry name" value="VWF_A"/>
</dbReference>
<dbReference type="InterPro" id="IPR036465">
    <property type="entry name" value="vWFA_dom_sf"/>
</dbReference>
<dbReference type="PANTHER" id="PTHR12957">
    <property type="entry name" value="DEAD/H BOX POLYPEPTIDE 26/DICE1-RELATED"/>
    <property type="match status" value="1"/>
</dbReference>
<dbReference type="PANTHER" id="PTHR12957:SF22">
    <property type="entry name" value="INTEGRATOR COMPLEX SUBUNIT 6-LIKE"/>
    <property type="match status" value="1"/>
</dbReference>
<dbReference type="Pfam" id="PF25462">
    <property type="entry name" value="Beta-barrel_INTS6"/>
    <property type="match status" value="1"/>
</dbReference>
<dbReference type="Pfam" id="PF15300">
    <property type="entry name" value="INT_SG_DDX_CT_C"/>
    <property type="match status" value="1"/>
</dbReference>
<dbReference type="Pfam" id="PF13519">
    <property type="entry name" value="VWA_2"/>
    <property type="match status" value="1"/>
</dbReference>
<dbReference type="SUPFAM" id="SSF53300">
    <property type="entry name" value="vWA-like"/>
    <property type="match status" value="1"/>
</dbReference>
<dbReference type="PROSITE" id="PS50234">
    <property type="entry name" value="VWFA"/>
    <property type="match status" value="1"/>
</dbReference>
<feature type="chain" id="PRO_0000076216" description="Integrator complex subunit 6-like">
    <location>
        <begin position="1"/>
        <end position="861"/>
    </location>
</feature>
<feature type="domain" description="VWFA" evidence="2">
    <location>
        <begin position="3"/>
        <end position="227"/>
    </location>
</feature>
<feature type="modified residue" description="Phosphoserine" evidence="1">
    <location>
        <position position="617"/>
    </location>
</feature>
<evidence type="ECO:0000250" key="1">
    <source>
        <dbReference type="UniProtKB" id="Q5JSJ4"/>
    </source>
</evidence>
<evidence type="ECO:0000255" key="2">
    <source>
        <dbReference type="PROSITE-ProRule" id="PRU00219"/>
    </source>
</evidence>
<accession>Q8BND4</accession>
<proteinExistence type="evidence at transcript level"/>
<reference key="1">
    <citation type="journal article" date="2005" name="Science">
        <title>The transcriptional landscape of the mammalian genome.</title>
        <authorList>
            <person name="Carninci P."/>
            <person name="Kasukawa T."/>
            <person name="Katayama S."/>
            <person name="Gough J."/>
            <person name="Frith M.C."/>
            <person name="Maeda N."/>
            <person name="Oyama R."/>
            <person name="Ravasi T."/>
            <person name="Lenhard B."/>
            <person name="Wells C."/>
            <person name="Kodzius R."/>
            <person name="Shimokawa K."/>
            <person name="Bajic V.B."/>
            <person name="Brenner S.E."/>
            <person name="Batalov S."/>
            <person name="Forrest A.R."/>
            <person name="Zavolan M."/>
            <person name="Davis M.J."/>
            <person name="Wilming L.G."/>
            <person name="Aidinis V."/>
            <person name="Allen J.E."/>
            <person name="Ambesi-Impiombato A."/>
            <person name="Apweiler R."/>
            <person name="Aturaliya R.N."/>
            <person name="Bailey T.L."/>
            <person name="Bansal M."/>
            <person name="Baxter L."/>
            <person name="Beisel K.W."/>
            <person name="Bersano T."/>
            <person name="Bono H."/>
            <person name="Chalk A.M."/>
            <person name="Chiu K.P."/>
            <person name="Choudhary V."/>
            <person name="Christoffels A."/>
            <person name="Clutterbuck D.R."/>
            <person name="Crowe M.L."/>
            <person name="Dalla E."/>
            <person name="Dalrymple B.P."/>
            <person name="de Bono B."/>
            <person name="Della Gatta G."/>
            <person name="di Bernardo D."/>
            <person name="Down T."/>
            <person name="Engstrom P."/>
            <person name="Fagiolini M."/>
            <person name="Faulkner G."/>
            <person name="Fletcher C.F."/>
            <person name="Fukushima T."/>
            <person name="Furuno M."/>
            <person name="Futaki S."/>
            <person name="Gariboldi M."/>
            <person name="Georgii-Hemming P."/>
            <person name="Gingeras T.R."/>
            <person name="Gojobori T."/>
            <person name="Green R.E."/>
            <person name="Gustincich S."/>
            <person name="Harbers M."/>
            <person name="Hayashi Y."/>
            <person name="Hensch T.K."/>
            <person name="Hirokawa N."/>
            <person name="Hill D."/>
            <person name="Huminiecki L."/>
            <person name="Iacono M."/>
            <person name="Ikeo K."/>
            <person name="Iwama A."/>
            <person name="Ishikawa T."/>
            <person name="Jakt M."/>
            <person name="Kanapin A."/>
            <person name="Katoh M."/>
            <person name="Kawasawa Y."/>
            <person name="Kelso J."/>
            <person name="Kitamura H."/>
            <person name="Kitano H."/>
            <person name="Kollias G."/>
            <person name="Krishnan S.P."/>
            <person name="Kruger A."/>
            <person name="Kummerfeld S.K."/>
            <person name="Kurochkin I.V."/>
            <person name="Lareau L.F."/>
            <person name="Lazarevic D."/>
            <person name="Lipovich L."/>
            <person name="Liu J."/>
            <person name="Liuni S."/>
            <person name="McWilliam S."/>
            <person name="Madan Babu M."/>
            <person name="Madera M."/>
            <person name="Marchionni L."/>
            <person name="Matsuda H."/>
            <person name="Matsuzawa S."/>
            <person name="Miki H."/>
            <person name="Mignone F."/>
            <person name="Miyake S."/>
            <person name="Morris K."/>
            <person name="Mottagui-Tabar S."/>
            <person name="Mulder N."/>
            <person name="Nakano N."/>
            <person name="Nakauchi H."/>
            <person name="Ng P."/>
            <person name="Nilsson R."/>
            <person name="Nishiguchi S."/>
            <person name="Nishikawa S."/>
            <person name="Nori F."/>
            <person name="Ohara O."/>
            <person name="Okazaki Y."/>
            <person name="Orlando V."/>
            <person name="Pang K.C."/>
            <person name="Pavan W.J."/>
            <person name="Pavesi G."/>
            <person name="Pesole G."/>
            <person name="Petrovsky N."/>
            <person name="Piazza S."/>
            <person name="Reed J."/>
            <person name="Reid J.F."/>
            <person name="Ring B.Z."/>
            <person name="Ringwald M."/>
            <person name="Rost B."/>
            <person name="Ruan Y."/>
            <person name="Salzberg S.L."/>
            <person name="Sandelin A."/>
            <person name="Schneider C."/>
            <person name="Schoenbach C."/>
            <person name="Sekiguchi K."/>
            <person name="Semple C.A."/>
            <person name="Seno S."/>
            <person name="Sessa L."/>
            <person name="Sheng Y."/>
            <person name="Shibata Y."/>
            <person name="Shimada H."/>
            <person name="Shimada K."/>
            <person name="Silva D."/>
            <person name="Sinclair B."/>
            <person name="Sperling S."/>
            <person name="Stupka E."/>
            <person name="Sugiura K."/>
            <person name="Sultana R."/>
            <person name="Takenaka Y."/>
            <person name="Taki K."/>
            <person name="Tammoja K."/>
            <person name="Tan S.L."/>
            <person name="Tang S."/>
            <person name="Taylor M.S."/>
            <person name="Tegner J."/>
            <person name="Teichmann S.A."/>
            <person name="Ueda H.R."/>
            <person name="van Nimwegen E."/>
            <person name="Verardo R."/>
            <person name="Wei C.L."/>
            <person name="Yagi K."/>
            <person name="Yamanishi H."/>
            <person name="Zabarovsky E."/>
            <person name="Zhu S."/>
            <person name="Zimmer A."/>
            <person name="Hide W."/>
            <person name="Bult C."/>
            <person name="Grimmond S.M."/>
            <person name="Teasdale R.D."/>
            <person name="Liu E.T."/>
            <person name="Brusic V."/>
            <person name="Quackenbush J."/>
            <person name="Wahlestedt C."/>
            <person name="Mattick J.S."/>
            <person name="Hume D.A."/>
            <person name="Kai C."/>
            <person name="Sasaki D."/>
            <person name="Tomaru Y."/>
            <person name="Fukuda S."/>
            <person name="Kanamori-Katayama M."/>
            <person name="Suzuki M."/>
            <person name="Aoki J."/>
            <person name="Arakawa T."/>
            <person name="Iida J."/>
            <person name="Imamura K."/>
            <person name="Itoh M."/>
            <person name="Kato T."/>
            <person name="Kawaji H."/>
            <person name="Kawagashira N."/>
            <person name="Kawashima T."/>
            <person name="Kojima M."/>
            <person name="Kondo S."/>
            <person name="Konno H."/>
            <person name="Nakano K."/>
            <person name="Ninomiya N."/>
            <person name="Nishio T."/>
            <person name="Okada M."/>
            <person name="Plessy C."/>
            <person name="Shibata K."/>
            <person name="Shiraki T."/>
            <person name="Suzuki S."/>
            <person name="Tagami M."/>
            <person name="Waki K."/>
            <person name="Watahiki A."/>
            <person name="Okamura-Oho Y."/>
            <person name="Suzuki H."/>
            <person name="Kawai J."/>
            <person name="Hayashizaki Y."/>
        </authorList>
    </citation>
    <scope>NUCLEOTIDE SEQUENCE [LARGE SCALE MRNA]</scope>
    <source>
        <strain>C57BL/6J</strain>
        <tissue>Spinal ganglion</tissue>
    </source>
</reference>
<reference key="2">
    <citation type="journal article" date="2004" name="Genome Res.">
        <title>The status, quality, and expansion of the NIH full-length cDNA project: the Mammalian Gene Collection (MGC).</title>
        <authorList>
            <consortium name="The MGC Project Team"/>
        </authorList>
    </citation>
    <scope>NUCLEOTIDE SEQUENCE [LARGE SCALE MRNA]</scope>
    <source>
        <strain>CD-1</strain>
        <tissue>Neural stem cell</tissue>
    </source>
</reference>
<protein>
    <recommendedName>
        <fullName>Integrator complex subunit 6-like</fullName>
    </recommendedName>
    <alternativeName>
        <fullName>Protein DDX26B</fullName>
    </alternativeName>
</protein>
<keyword id="KW-0597">Phosphoprotein</keyword>
<keyword id="KW-1185">Reference proteome</keyword>
<organism>
    <name type="scientific">Mus musculus</name>
    <name type="common">Mouse</name>
    <dbReference type="NCBI Taxonomy" id="10090"/>
    <lineage>
        <taxon>Eukaryota</taxon>
        <taxon>Metazoa</taxon>
        <taxon>Chordata</taxon>
        <taxon>Craniata</taxon>
        <taxon>Vertebrata</taxon>
        <taxon>Euteleostomi</taxon>
        <taxon>Mammalia</taxon>
        <taxon>Eutheria</taxon>
        <taxon>Euarchontoglires</taxon>
        <taxon>Glires</taxon>
        <taxon>Rodentia</taxon>
        <taxon>Myomorpha</taxon>
        <taxon>Muroidea</taxon>
        <taxon>Muridae</taxon>
        <taxon>Murinae</taxon>
        <taxon>Mus</taxon>
        <taxon>Mus</taxon>
    </lineage>
</organism>
<gene>
    <name type="primary">Ints6l</name>
    <name type="synonym">Ddx26b</name>
</gene>
<name>INT6L_MOUSE</name>
<sequence length="861" mass="96941">MPILLFLIDTSASMNQRTDLGTSYLDIAKGAVELFLKLRARDPASRGDRYMLVTYDEPPYCIKAGWKENHATFMNELKNLQASGLTTLGQALRSSFDLLNLNRLISGIDNYGQGRNPFFLEPSILITITDGNKLTSTASVQEELHLPLNSPLPGSELTKEPFRWDQRLFALVLRLPGVASTEPEQLGSVPSDESAITQMCEVTGGRSYCVRTQRMLNQCLESLVQKVQSGVVINFEKTGPDPLPVGEDTLMELCRPSNLFAAQPWHSCHKLIYVRPNSKTGVPVGHWPIPESFWPEQNLPSLPPRTSHPVVRFSCVDCEPMVIDKLPFDKYELEPSPLTQYILERKSPHTCWQVFVTSSSKYNELGYPFGYLKASTTLTCVNLFVMPYNYPVLLPLLDDLFKVHKLKPNLKWRQAFDSYLKTLPPYYLITKLESDQILASVGKKPPQEIGIKVKNHSACGLPLAHNKSFRKLLKEIIGESAPRLTELNPKEFAGFQVGLLNKDLKPQTYRNAYDIPRRGLLDQLTRMRSNLLQTRKFIVGQDEDSLHSVPVAQMGNYQEYLKMLASPLRELDPDQPKRLHTFGNPFKQDKKGMMIDEADEFVVGPQNKVKRPGEPNSPMSSKRRRSMSLLLRRAQTAPTVTNHVGGKGPLSASWFPSCPSLVKHTFGHPDTTVIHDTHEEKMENGQSPPDGFLLKSAPAEFMNVSGESFISSQLDSLSDDFTGLRKDGFIHKPGNNILLGGAKTCSLSVADQKITMASALETVPNSMQITPAMAQGINADIKHQLMKEVRKFGRKYERIFILLEEVQGPLETKKQFVEFTIKEAARFKRRVLIQYLEKVLEKIDSHHLLNNVNHINSRSSC</sequence>